<reference key="1">
    <citation type="journal article" date="2002" name="Nature">
        <title>The genome sequence of Schizosaccharomyces pombe.</title>
        <authorList>
            <person name="Wood V."/>
            <person name="Gwilliam R."/>
            <person name="Rajandream M.A."/>
            <person name="Lyne M.H."/>
            <person name="Lyne R."/>
            <person name="Stewart A."/>
            <person name="Sgouros J.G."/>
            <person name="Peat N."/>
            <person name="Hayles J."/>
            <person name="Baker S.G."/>
            <person name="Basham D."/>
            <person name="Bowman S."/>
            <person name="Brooks K."/>
            <person name="Brown D."/>
            <person name="Brown S."/>
            <person name="Chillingworth T."/>
            <person name="Churcher C.M."/>
            <person name="Collins M."/>
            <person name="Connor R."/>
            <person name="Cronin A."/>
            <person name="Davis P."/>
            <person name="Feltwell T."/>
            <person name="Fraser A."/>
            <person name="Gentles S."/>
            <person name="Goble A."/>
            <person name="Hamlin N."/>
            <person name="Harris D.E."/>
            <person name="Hidalgo J."/>
            <person name="Hodgson G."/>
            <person name="Holroyd S."/>
            <person name="Hornsby T."/>
            <person name="Howarth S."/>
            <person name="Huckle E.J."/>
            <person name="Hunt S."/>
            <person name="Jagels K."/>
            <person name="James K.D."/>
            <person name="Jones L."/>
            <person name="Jones M."/>
            <person name="Leather S."/>
            <person name="McDonald S."/>
            <person name="McLean J."/>
            <person name="Mooney P."/>
            <person name="Moule S."/>
            <person name="Mungall K.L."/>
            <person name="Murphy L.D."/>
            <person name="Niblett D."/>
            <person name="Odell C."/>
            <person name="Oliver K."/>
            <person name="O'Neil S."/>
            <person name="Pearson D."/>
            <person name="Quail M.A."/>
            <person name="Rabbinowitsch E."/>
            <person name="Rutherford K.M."/>
            <person name="Rutter S."/>
            <person name="Saunders D."/>
            <person name="Seeger K."/>
            <person name="Sharp S."/>
            <person name="Skelton J."/>
            <person name="Simmonds M.N."/>
            <person name="Squares R."/>
            <person name="Squares S."/>
            <person name="Stevens K."/>
            <person name="Taylor K."/>
            <person name="Taylor R.G."/>
            <person name="Tivey A."/>
            <person name="Walsh S.V."/>
            <person name="Warren T."/>
            <person name="Whitehead S."/>
            <person name="Woodward J.R."/>
            <person name="Volckaert G."/>
            <person name="Aert R."/>
            <person name="Robben J."/>
            <person name="Grymonprez B."/>
            <person name="Weltjens I."/>
            <person name="Vanstreels E."/>
            <person name="Rieger M."/>
            <person name="Schaefer M."/>
            <person name="Mueller-Auer S."/>
            <person name="Gabel C."/>
            <person name="Fuchs M."/>
            <person name="Duesterhoeft A."/>
            <person name="Fritzc C."/>
            <person name="Holzer E."/>
            <person name="Moestl D."/>
            <person name="Hilbert H."/>
            <person name="Borzym K."/>
            <person name="Langer I."/>
            <person name="Beck A."/>
            <person name="Lehrach H."/>
            <person name="Reinhardt R."/>
            <person name="Pohl T.M."/>
            <person name="Eger P."/>
            <person name="Zimmermann W."/>
            <person name="Wedler H."/>
            <person name="Wambutt R."/>
            <person name="Purnelle B."/>
            <person name="Goffeau A."/>
            <person name="Cadieu E."/>
            <person name="Dreano S."/>
            <person name="Gloux S."/>
            <person name="Lelaure V."/>
            <person name="Mottier S."/>
            <person name="Galibert F."/>
            <person name="Aves S.J."/>
            <person name="Xiang Z."/>
            <person name="Hunt C."/>
            <person name="Moore K."/>
            <person name="Hurst S.M."/>
            <person name="Lucas M."/>
            <person name="Rochet M."/>
            <person name="Gaillardin C."/>
            <person name="Tallada V.A."/>
            <person name="Garzon A."/>
            <person name="Thode G."/>
            <person name="Daga R.R."/>
            <person name="Cruzado L."/>
            <person name="Jimenez J."/>
            <person name="Sanchez M."/>
            <person name="del Rey F."/>
            <person name="Benito J."/>
            <person name="Dominguez A."/>
            <person name="Revuelta J.L."/>
            <person name="Moreno S."/>
            <person name="Armstrong J."/>
            <person name="Forsburg S.L."/>
            <person name="Cerutti L."/>
            <person name="Lowe T."/>
            <person name="McCombie W.R."/>
            <person name="Paulsen I."/>
            <person name="Potashkin J."/>
            <person name="Shpakovski G.V."/>
            <person name="Ussery D."/>
            <person name="Barrell B.G."/>
            <person name="Nurse P."/>
        </authorList>
    </citation>
    <scope>NUCLEOTIDE SEQUENCE [LARGE SCALE GENOMIC DNA]</scope>
    <source>
        <strain>972 / ATCC 24843</strain>
    </source>
</reference>
<reference key="2">
    <citation type="journal article" date="2010" name="Genome Biol.">
        <title>Global fitness profiling of fission yeast deletion strains by barcode sequencing.</title>
        <authorList>
            <person name="Han T.X."/>
            <person name="Xu X.Y."/>
            <person name="Zhang M.J."/>
            <person name="Peng X."/>
            <person name="Du L.L."/>
        </authorList>
    </citation>
    <scope>DISRUPTION PHENOTYPE</scope>
</reference>
<reference key="3">
    <citation type="journal article" date="2010" name="Microbiology">
        <title>Characterization of two different types of UDP-glucose/-galactose 4-epimerase involved in galactosylation in fission yeast.</title>
        <authorList>
            <person name="Suzuki S."/>
            <person name="Matsuzawa T."/>
            <person name="Nukigi Y."/>
            <person name="Takegawa K."/>
            <person name="Tanaka N."/>
        </authorList>
    </citation>
    <scope>FUNCTION</scope>
    <scope>CATALYTIC ACTIVITY</scope>
</reference>
<proteinExistence type="evidence at protein level"/>
<comment type="function">
    <text evidence="2">Major UDP-glucose/-galactose 4-epimerase under glucose-rich conditions involved in protein galactosylation.</text>
</comment>
<comment type="catalytic activity">
    <reaction evidence="2">
        <text>UDP-alpha-D-glucose = UDP-alpha-D-galactose</text>
        <dbReference type="Rhea" id="RHEA:22168"/>
        <dbReference type="ChEBI" id="CHEBI:58885"/>
        <dbReference type="ChEBI" id="CHEBI:66914"/>
        <dbReference type="EC" id="5.1.3.2"/>
    </reaction>
</comment>
<comment type="cofactor">
    <cofactor evidence="1">
        <name>NAD(+)</name>
        <dbReference type="ChEBI" id="CHEBI:57540"/>
    </cofactor>
</comment>
<comment type="pathway">
    <text>Carbohydrate metabolism; galactose metabolism.</text>
</comment>
<comment type="disruption phenotype">
    <text evidence="3">Leads to sensitivity to thiabendazole and microtubule-depolymerizing drugs.</text>
</comment>
<comment type="similarity">
    <text evidence="4">Belongs to the NAD(P)-dependent epimerase/dehydratase family.</text>
</comment>
<name>UGE1_SCHPO</name>
<organism>
    <name type="scientific">Schizosaccharomyces pombe (strain 972 / ATCC 24843)</name>
    <name type="common">Fission yeast</name>
    <dbReference type="NCBI Taxonomy" id="284812"/>
    <lineage>
        <taxon>Eukaryota</taxon>
        <taxon>Fungi</taxon>
        <taxon>Dikarya</taxon>
        <taxon>Ascomycota</taxon>
        <taxon>Taphrinomycotina</taxon>
        <taxon>Schizosaccharomycetes</taxon>
        <taxon>Schizosaccharomycetales</taxon>
        <taxon>Schizosaccharomycetaceae</taxon>
        <taxon>Schizosaccharomyces</taxon>
    </lineage>
</organism>
<keyword id="KW-0119">Carbohydrate metabolism</keyword>
<keyword id="KW-0299">Galactose metabolism</keyword>
<keyword id="KW-0413">Isomerase</keyword>
<keyword id="KW-0520">NAD</keyword>
<keyword id="KW-1185">Reference proteome</keyword>
<evidence type="ECO:0000250" key="1"/>
<evidence type="ECO:0000269" key="2">
    <source>
    </source>
</evidence>
<evidence type="ECO:0000269" key="3">
    <source>
    </source>
</evidence>
<evidence type="ECO:0000305" key="4"/>
<protein>
    <recommendedName>
        <fullName>UDP-glucose 4-epimerase uge1</fullName>
        <ecNumber>5.1.3.2</ecNumber>
    </recommendedName>
    <alternativeName>
        <fullName>Galactowaldenase</fullName>
    </alternativeName>
</protein>
<sequence length="355" mass="39234">MTGVHEGTVLVTGGAGYIGSHTCVVLLEKGYDVVIVDNLCNSRVEAVHRIEKLTGKKVIFHQVDLLDEPALDKVFANQNISAVIHFAGLKAVGESVQVPLSYYKNNISGTINLIECMKKYNVRDFVFSSSATVYGDPTRPGGTIPIPESCPREGTSPYGRTKLFIENIIEDETKVNKSLNAALLRYFNPGGAHPSGELGEDPLGIPNNLLPYIAQVAVGRLDHLNVFGDDYPTSDGTPIRDYIHVCDLAEAHVAALDYLRQHFVSCRPWNLGSGTGSTVFQVLNAFSKAVGRDLPYKVTPRRAGDVVNLTANPTRANEELKWKTSRSIYEICVDTWRWQQKYPYGFDLTHTKTYK</sequence>
<dbReference type="EC" id="5.1.3.2"/>
<dbReference type="EMBL" id="CU329671">
    <property type="protein sequence ID" value="CAB44766.1"/>
    <property type="molecule type" value="Genomic_DNA"/>
</dbReference>
<dbReference type="PIR" id="T40321">
    <property type="entry name" value="T40321"/>
</dbReference>
<dbReference type="RefSeq" id="NP_596043.1">
    <property type="nucleotide sequence ID" value="NM_001021953.2"/>
</dbReference>
<dbReference type="SMR" id="Q9Y7X5"/>
<dbReference type="BioGRID" id="277454">
    <property type="interactions" value="21"/>
</dbReference>
<dbReference type="FunCoup" id="Q9Y7X5">
    <property type="interactions" value="445"/>
</dbReference>
<dbReference type="STRING" id="284812.Q9Y7X5"/>
<dbReference type="iPTMnet" id="Q9Y7X5"/>
<dbReference type="PaxDb" id="4896-SPBC365.14c.1"/>
<dbReference type="EnsemblFungi" id="SPBC365.14c.1">
    <property type="protein sequence ID" value="SPBC365.14c.1:pep"/>
    <property type="gene ID" value="SPBC365.14c"/>
</dbReference>
<dbReference type="GeneID" id="2540938"/>
<dbReference type="KEGG" id="spo:2540938"/>
<dbReference type="PomBase" id="SPBC365.14c">
    <property type="gene designation" value="uge1"/>
</dbReference>
<dbReference type="VEuPathDB" id="FungiDB:SPBC365.14c"/>
<dbReference type="eggNOG" id="KOG1371">
    <property type="taxonomic scope" value="Eukaryota"/>
</dbReference>
<dbReference type="HOGENOM" id="CLU_007383_1_10_1"/>
<dbReference type="InParanoid" id="Q9Y7X5"/>
<dbReference type="OMA" id="GEHLICN"/>
<dbReference type="PhylomeDB" id="Q9Y7X5"/>
<dbReference type="BRENDA" id="5.1.3.2">
    <property type="organism ID" value="5613"/>
</dbReference>
<dbReference type="UniPathway" id="UPA00214"/>
<dbReference type="PRO" id="PR:Q9Y7X5"/>
<dbReference type="Proteomes" id="UP000002485">
    <property type="component" value="Chromosome II"/>
</dbReference>
<dbReference type="GO" id="GO:0005829">
    <property type="term" value="C:cytosol"/>
    <property type="evidence" value="ECO:0000318"/>
    <property type="project" value="GO_Central"/>
</dbReference>
<dbReference type="GO" id="GO:0003978">
    <property type="term" value="F:UDP-glucose 4-epimerase activity"/>
    <property type="evidence" value="ECO:0000315"/>
    <property type="project" value="PomBase"/>
</dbReference>
<dbReference type="GO" id="GO:0006012">
    <property type="term" value="P:galactose metabolic process"/>
    <property type="evidence" value="ECO:0007669"/>
    <property type="project" value="UniProtKB-UniPathway"/>
</dbReference>
<dbReference type="GO" id="GO:0005996">
    <property type="term" value="P:monosaccharide metabolic process"/>
    <property type="evidence" value="ECO:0000318"/>
    <property type="project" value="GO_Central"/>
</dbReference>
<dbReference type="GO" id="GO:0052574">
    <property type="term" value="P:UDP-galactose biosynthetic process"/>
    <property type="evidence" value="ECO:0000315"/>
    <property type="project" value="PomBase"/>
</dbReference>
<dbReference type="CDD" id="cd05247">
    <property type="entry name" value="UDP_G4E_1_SDR_e"/>
    <property type="match status" value="1"/>
</dbReference>
<dbReference type="Gene3D" id="3.40.50.720">
    <property type="entry name" value="NAD(P)-binding Rossmann-like Domain"/>
    <property type="match status" value="1"/>
</dbReference>
<dbReference type="Gene3D" id="3.90.25.10">
    <property type="entry name" value="UDP-galactose 4-epimerase, domain 1"/>
    <property type="match status" value="1"/>
</dbReference>
<dbReference type="InterPro" id="IPR016040">
    <property type="entry name" value="NAD(P)-bd_dom"/>
</dbReference>
<dbReference type="InterPro" id="IPR036291">
    <property type="entry name" value="NAD(P)-bd_dom_sf"/>
</dbReference>
<dbReference type="InterPro" id="IPR005886">
    <property type="entry name" value="UDP_G4E"/>
</dbReference>
<dbReference type="NCBIfam" id="TIGR01179">
    <property type="entry name" value="galE"/>
    <property type="match status" value="1"/>
</dbReference>
<dbReference type="NCBIfam" id="NF007956">
    <property type="entry name" value="PRK10675.1"/>
    <property type="match status" value="1"/>
</dbReference>
<dbReference type="PANTHER" id="PTHR43725">
    <property type="entry name" value="UDP-GLUCOSE 4-EPIMERASE"/>
    <property type="match status" value="1"/>
</dbReference>
<dbReference type="PANTHER" id="PTHR43725:SF39">
    <property type="entry name" value="UDP-GLUCOSE 4-EPIMERASE UGE1"/>
    <property type="match status" value="1"/>
</dbReference>
<dbReference type="Pfam" id="PF16363">
    <property type="entry name" value="GDP_Man_Dehyd"/>
    <property type="match status" value="1"/>
</dbReference>
<dbReference type="SUPFAM" id="SSF51735">
    <property type="entry name" value="NAD(P)-binding Rossmann-fold domains"/>
    <property type="match status" value="1"/>
</dbReference>
<accession>Q9Y7X5</accession>
<gene>
    <name type="primary">uge1</name>
    <name type="ORF">SPBC365.14c</name>
</gene>
<feature type="chain" id="PRO_0000318143" description="UDP-glucose 4-epimerase uge1">
    <location>
        <begin position="1"/>
        <end position="355"/>
    </location>
</feature>
<feature type="binding site" evidence="1">
    <location>
        <begin position="8"/>
        <end position="39"/>
    </location>
    <ligand>
        <name>NAD(+)</name>
        <dbReference type="ChEBI" id="CHEBI:57540"/>
    </ligand>
</feature>